<comment type="function">
    <text evidence="2">One of the essential components for the initiation of protein synthesis. Protects formylmethionyl-tRNA from spontaneous hydrolysis and promotes its binding to the 30S ribosomal subunits. Also involved in the hydrolysis of GTP during the formation of the 70S ribosomal complex.</text>
</comment>
<comment type="subcellular location">
    <subcellularLocation>
        <location evidence="2">Cytoplasm</location>
    </subcellularLocation>
</comment>
<comment type="similarity">
    <text evidence="2">Belongs to the TRAFAC class translation factor GTPase superfamily. Classic translation factor GTPase family. IF-2 subfamily.</text>
</comment>
<name>IF2_ECOL5</name>
<reference key="1">
    <citation type="journal article" date="2006" name="Mol. Microbiol.">
        <title>Role of pathogenicity island-associated integrases in the genome plasticity of uropathogenic Escherichia coli strain 536.</title>
        <authorList>
            <person name="Hochhut B."/>
            <person name="Wilde C."/>
            <person name="Balling G."/>
            <person name="Middendorf B."/>
            <person name="Dobrindt U."/>
            <person name="Brzuszkiewicz E."/>
            <person name="Gottschalk G."/>
            <person name="Carniel E."/>
            <person name="Hacker J."/>
        </authorList>
    </citation>
    <scope>NUCLEOTIDE SEQUENCE [LARGE SCALE GENOMIC DNA]</scope>
    <source>
        <strain>536 / UPEC</strain>
    </source>
</reference>
<evidence type="ECO:0000250" key="1"/>
<evidence type="ECO:0000255" key="2">
    <source>
        <dbReference type="HAMAP-Rule" id="MF_00100"/>
    </source>
</evidence>
<evidence type="ECO:0000256" key="3">
    <source>
        <dbReference type="SAM" id="MobiDB-lite"/>
    </source>
</evidence>
<sequence length="890" mass="97279">MTDVTIKTLAAERQTSVERLVQQFADAGIRKSADDSVSAQEKQTLIDHLNQKNSGPDKLTLQRKTRSTLNIPGTGGKSKSVQIEVRKKRTFVKRDPQEAERLAAEEQAQREAEEQARREAEESAKREAQQKAEREAAEQAKREAAEQAKREAAEKDKVSNQQDDMTKNAQAEKARREQEAAELKRKAEEEARRKLEEEARRVAEEARRMAEENKWTDNAEPTEDSSDYHVTTSQHARQAEDESDREVEGGRGRGRNAKAARPKKGNKHAESKADREEARAAVRGGKGGKRKGSSLQQGFQKPAQAVNRDVVIGETITVGELANKMAVKGSQVIKAMMKLGAMATINQVIDQETAQLVAEEMGHKVILRRENELEEAVMSDRDTGAAAEPRAPVVTIMGHVDHGKTSLLDYIRSTKVASGEAGGITQHIGAYHVETENGMITFLDTPGHAAFTSMRARGAQATDIVVLVVAADDGVMPQTIEAIQHAKAAGVPVVVAVNKIDKPEADPDRVKNELSQYGILPEEWGGESQFVHVSAKAGTGIDELLDAILLQAEVLELKAVRKGMASGAVIESFLDKGRGPVATVLVREGTLHKGDIVLCGFEYGRVRAMRNELGQEVLEAGPSIPVEILGLSGVPAAGDEVTVVRDEKKAREVALYRQGKFREVKLARQQKSKLENMFANMTEGEVHEVNIVLKADVQGSVEAISDSLLKLSTDEVKVKIIGSGVGGITETDATLAAASNAILVGFNVRADASARKVIEAESLDLRYYSVIYNLIDEVKAAMSGMLSPELKQQIIGLAEVRDVFKSPKFGAIAGCMVTEGVVKRHNPIRVLRDNVVIYEGELESLRRFKDDVNEVRNGMECGIGVKNYNDVRTGDVIEVFEIIEIQRTIA</sequence>
<protein>
    <recommendedName>
        <fullName evidence="2">Translation initiation factor IF-2</fullName>
    </recommendedName>
</protein>
<feature type="chain" id="PRO_1000008239" description="Translation initiation factor IF-2">
    <location>
        <begin position="1"/>
        <end position="890"/>
    </location>
</feature>
<feature type="domain" description="tr-type G">
    <location>
        <begin position="389"/>
        <end position="558"/>
    </location>
</feature>
<feature type="region of interest" description="Disordered" evidence="3">
    <location>
        <begin position="45"/>
        <end position="304"/>
    </location>
</feature>
<feature type="region of interest" description="G1" evidence="1">
    <location>
        <begin position="398"/>
        <end position="405"/>
    </location>
</feature>
<feature type="region of interest" description="G2" evidence="1">
    <location>
        <begin position="423"/>
        <end position="427"/>
    </location>
</feature>
<feature type="region of interest" description="G3" evidence="1">
    <location>
        <begin position="444"/>
        <end position="447"/>
    </location>
</feature>
<feature type="region of interest" description="G4" evidence="1">
    <location>
        <begin position="498"/>
        <end position="501"/>
    </location>
</feature>
<feature type="region of interest" description="G5" evidence="1">
    <location>
        <begin position="534"/>
        <end position="536"/>
    </location>
</feature>
<feature type="compositionally biased region" description="Polar residues" evidence="3">
    <location>
        <begin position="67"/>
        <end position="81"/>
    </location>
</feature>
<feature type="compositionally biased region" description="Basic and acidic residues" evidence="3">
    <location>
        <begin position="92"/>
        <end position="217"/>
    </location>
</feature>
<feature type="compositionally biased region" description="Basic residues" evidence="3">
    <location>
        <begin position="252"/>
        <end position="266"/>
    </location>
</feature>
<feature type="compositionally biased region" description="Basic and acidic residues" evidence="3">
    <location>
        <begin position="267"/>
        <end position="280"/>
    </location>
</feature>
<feature type="binding site" evidence="2">
    <location>
        <begin position="398"/>
        <end position="405"/>
    </location>
    <ligand>
        <name>GTP</name>
        <dbReference type="ChEBI" id="CHEBI:37565"/>
    </ligand>
</feature>
<feature type="binding site" evidence="2">
    <location>
        <begin position="444"/>
        <end position="448"/>
    </location>
    <ligand>
        <name>GTP</name>
        <dbReference type="ChEBI" id="CHEBI:37565"/>
    </ligand>
</feature>
<feature type="binding site" evidence="2">
    <location>
        <begin position="498"/>
        <end position="501"/>
    </location>
    <ligand>
        <name>GTP</name>
        <dbReference type="ChEBI" id="CHEBI:37565"/>
    </ligand>
</feature>
<feature type="modified residue" description="N6-acetyllysine" evidence="1">
    <location>
        <position position="808"/>
    </location>
</feature>
<accession>Q0TCU1</accession>
<gene>
    <name evidence="2" type="primary">infB</name>
    <name type="ordered locus">ECP_3256</name>
</gene>
<dbReference type="EMBL" id="CP000247">
    <property type="protein sequence ID" value="ABG71238.1"/>
    <property type="molecule type" value="Genomic_DNA"/>
</dbReference>
<dbReference type="RefSeq" id="WP_000133040.1">
    <property type="nucleotide sequence ID" value="NC_008253.1"/>
</dbReference>
<dbReference type="SMR" id="Q0TCU1"/>
<dbReference type="KEGG" id="ecp:ECP_3256"/>
<dbReference type="HOGENOM" id="CLU_006301_6_3_6"/>
<dbReference type="Proteomes" id="UP000009182">
    <property type="component" value="Chromosome"/>
</dbReference>
<dbReference type="GO" id="GO:0005829">
    <property type="term" value="C:cytosol"/>
    <property type="evidence" value="ECO:0007669"/>
    <property type="project" value="TreeGrafter"/>
</dbReference>
<dbReference type="GO" id="GO:0005525">
    <property type="term" value="F:GTP binding"/>
    <property type="evidence" value="ECO:0007669"/>
    <property type="project" value="UniProtKB-KW"/>
</dbReference>
<dbReference type="GO" id="GO:0003924">
    <property type="term" value="F:GTPase activity"/>
    <property type="evidence" value="ECO:0007669"/>
    <property type="project" value="UniProtKB-UniRule"/>
</dbReference>
<dbReference type="GO" id="GO:0097216">
    <property type="term" value="F:guanosine tetraphosphate binding"/>
    <property type="evidence" value="ECO:0007669"/>
    <property type="project" value="UniProtKB-ARBA"/>
</dbReference>
<dbReference type="GO" id="GO:0003743">
    <property type="term" value="F:translation initiation factor activity"/>
    <property type="evidence" value="ECO:0007669"/>
    <property type="project" value="UniProtKB-UniRule"/>
</dbReference>
<dbReference type="CDD" id="cd01887">
    <property type="entry name" value="IF2_eIF5B"/>
    <property type="match status" value="1"/>
</dbReference>
<dbReference type="CDD" id="cd03702">
    <property type="entry name" value="IF2_mtIF2_II"/>
    <property type="match status" value="1"/>
</dbReference>
<dbReference type="CDD" id="cd03692">
    <property type="entry name" value="mtIF2_IVc"/>
    <property type="match status" value="1"/>
</dbReference>
<dbReference type="FunFam" id="2.40.30.10:FF:000007">
    <property type="entry name" value="Translation initiation factor IF-2"/>
    <property type="match status" value="1"/>
</dbReference>
<dbReference type="FunFam" id="2.40.30.10:FF:000008">
    <property type="entry name" value="Translation initiation factor IF-2"/>
    <property type="match status" value="1"/>
</dbReference>
<dbReference type="FunFam" id="3.30.56.50:FF:000001">
    <property type="entry name" value="Translation initiation factor IF-2"/>
    <property type="match status" value="1"/>
</dbReference>
<dbReference type="FunFam" id="3.40.50.10050:FF:000001">
    <property type="entry name" value="Translation initiation factor IF-2"/>
    <property type="match status" value="1"/>
</dbReference>
<dbReference type="FunFam" id="3.40.50.300:FF:000019">
    <property type="entry name" value="Translation initiation factor IF-2"/>
    <property type="match status" value="1"/>
</dbReference>
<dbReference type="Gene3D" id="3.40.50.300">
    <property type="entry name" value="P-loop containing nucleotide triphosphate hydrolases"/>
    <property type="match status" value="1"/>
</dbReference>
<dbReference type="Gene3D" id="3.30.56.50">
    <property type="entry name" value="Putative DNA-binding domain, N-terminal subdomain of bacterial translation initiation factor IF2"/>
    <property type="match status" value="1"/>
</dbReference>
<dbReference type="Gene3D" id="2.40.30.10">
    <property type="entry name" value="Translation factors"/>
    <property type="match status" value="2"/>
</dbReference>
<dbReference type="Gene3D" id="3.40.50.10050">
    <property type="entry name" value="Translation initiation factor IF- 2, domain 3"/>
    <property type="match status" value="1"/>
</dbReference>
<dbReference type="HAMAP" id="MF_00100_B">
    <property type="entry name" value="IF_2_B"/>
    <property type="match status" value="1"/>
</dbReference>
<dbReference type="InterPro" id="IPR009061">
    <property type="entry name" value="DNA-bd_dom_put_sf"/>
</dbReference>
<dbReference type="InterPro" id="IPR053905">
    <property type="entry name" value="EF-G-like_DII"/>
</dbReference>
<dbReference type="InterPro" id="IPR004161">
    <property type="entry name" value="EFTu-like_2"/>
</dbReference>
<dbReference type="InterPro" id="IPR013575">
    <property type="entry name" value="IF2_assoc_dom_bac"/>
</dbReference>
<dbReference type="InterPro" id="IPR044145">
    <property type="entry name" value="IF2_II"/>
</dbReference>
<dbReference type="InterPro" id="IPR006847">
    <property type="entry name" value="IF2_N"/>
</dbReference>
<dbReference type="InterPro" id="IPR027417">
    <property type="entry name" value="P-loop_NTPase"/>
</dbReference>
<dbReference type="InterPro" id="IPR005225">
    <property type="entry name" value="Small_GTP-bd"/>
</dbReference>
<dbReference type="InterPro" id="IPR000795">
    <property type="entry name" value="T_Tr_GTP-bd_dom"/>
</dbReference>
<dbReference type="InterPro" id="IPR000178">
    <property type="entry name" value="TF_IF2_bacterial-like"/>
</dbReference>
<dbReference type="InterPro" id="IPR015760">
    <property type="entry name" value="TIF_IF2"/>
</dbReference>
<dbReference type="InterPro" id="IPR023115">
    <property type="entry name" value="TIF_IF2_dom3"/>
</dbReference>
<dbReference type="InterPro" id="IPR036925">
    <property type="entry name" value="TIF_IF2_dom3_sf"/>
</dbReference>
<dbReference type="InterPro" id="IPR009000">
    <property type="entry name" value="Transl_B-barrel_sf"/>
</dbReference>
<dbReference type="NCBIfam" id="TIGR00487">
    <property type="entry name" value="IF-2"/>
    <property type="match status" value="1"/>
</dbReference>
<dbReference type="NCBIfam" id="TIGR00231">
    <property type="entry name" value="small_GTP"/>
    <property type="match status" value="1"/>
</dbReference>
<dbReference type="PANTHER" id="PTHR43381:SF5">
    <property type="entry name" value="TR-TYPE G DOMAIN-CONTAINING PROTEIN"/>
    <property type="match status" value="1"/>
</dbReference>
<dbReference type="PANTHER" id="PTHR43381">
    <property type="entry name" value="TRANSLATION INITIATION FACTOR IF-2-RELATED"/>
    <property type="match status" value="1"/>
</dbReference>
<dbReference type="Pfam" id="PF22042">
    <property type="entry name" value="EF-G_D2"/>
    <property type="match status" value="1"/>
</dbReference>
<dbReference type="Pfam" id="PF00009">
    <property type="entry name" value="GTP_EFTU"/>
    <property type="match status" value="1"/>
</dbReference>
<dbReference type="Pfam" id="PF03144">
    <property type="entry name" value="GTP_EFTU_D2"/>
    <property type="match status" value="1"/>
</dbReference>
<dbReference type="Pfam" id="PF11987">
    <property type="entry name" value="IF-2"/>
    <property type="match status" value="1"/>
</dbReference>
<dbReference type="Pfam" id="PF08364">
    <property type="entry name" value="IF2_assoc"/>
    <property type="match status" value="1"/>
</dbReference>
<dbReference type="Pfam" id="PF04760">
    <property type="entry name" value="IF2_N"/>
    <property type="match status" value="2"/>
</dbReference>
<dbReference type="SUPFAM" id="SSF52156">
    <property type="entry name" value="Initiation factor IF2/eIF5b, domain 3"/>
    <property type="match status" value="1"/>
</dbReference>
<dbReference type="SUPFAM" id="SSF52540">
    <property type="entry name" value="P-loop containing nucleoside triphosphate hydrolases"/>
    <property type="match status" value="1"/>
</dbReference>
<dbReference type="SUPFAM" id="SSF46955">
    <property type="entry name" value="Putative DNA-binding domain"/>
    <property type="match status" value="1"/>
</dbReference>
<dbReference type="SUPFAM" id="SSF50447">
    <property type="entry name" value="Translation proteins"/>
    <property type="match status" value="2"/>
</dbReference>
<dbReference type="PROSITE" id="PS51722">
    <property type="entry name" value="G_TR_2"/>
    <property type="match status" value="1"/>
</dbReference>
<dbReference type="PROSITE" id="PS01176">
    <property type="entry name" value="IF2"/>
    <property type="match status" value="1"/>
</dbReference>
<proteinExistence type="inferred from homology"/>
<keyword id="KW-0007">Acetylation</keyword>
<keyword id="KW-0963">Cytoplasm</keyword>
<keyword id="KW-0342">GTP-binding</keyword>
<keyword id="KW-0396">Initiation factor</keyword>
<keyword id="KW-0547">Nucleotide-binding</keyword>
<keyword id="KW-0648">Protein biosynthesis</keyword>
<organism>
    <name type="scientific">Escherichia coli O6:K15:H31 (strain 536 / UPEC)</name>
    <dbReference type="NCBI Taxonomy" id="362663"/>
    <lineage>
        <taxon>Bacteria</taxon>
        <taxon>Pseudomonadati</taxon>
        <taxon>Pseudomonadota</taxon>
        <taxon>Gammaproteobacteria</taxon>
        <taxon>Enterobacterales</taxon>
        <taxon>Enterobacteriaceae</taxon>
        <taxon>Escherichia</taxon>
    </lineage>
</organism>